<gene>
    <name type="primary">atp6s14</name>
    <name type="synonym">vatf</name>
</gene>
<name>VATF_XENLA</name>
<protein>
    <recommendedName>
        <fullName>V-type proton ATPase subunit F</fullName>
        <shortName>V-ATPase subunit F</shortName>
    </recommendedName>
    <alternativeName>
        <fullName>V-ATPase 14 kDa subunit</fullName>
    </alternativeName>
    <alternativeName>
        <fullName>Vacuolar proton pump subunit F</fullName>
    </alternativeName>
</protein>
<dbReference type="EMBL" id="AF278716">
    <property type="protein sequence ID" value="AAF86347.1"/>
    <property type="molecule type" value="mRNA"/>
</dbReference>
<dbReference type="SMR" id="Q9I8H3"/>
<dbReference type="AGR" id="Xenbase:XB-GENE-6254216"/>
<dbReference type="Xenbase" id="XB-GENE-6254216">
    <property type="gene designation" value="atp6v1f.L"/>
</dbReference>
<dbReference type="Proteomes" id="UP000186698">
    <property type="component" value="Unplaced"/>
</dbReference>
<dbReference type="GO" id="GO:0016020">
    <property type="term" value="C:membrane"/>
    <property type="evidence" value="ECO:0000318"/>
    <property type="project" value="GO_Central"/>
</dbReference>
<dbReference type="GO" id="GO:0033180">
    <property type="term" value="C:proton-transporting V-type ATPase, V1 domain"/>
    <property type="evidence" value="ECO:0007669"/>
    <property type="project" value="InterPro"/>
</dbReference>
<dbReference type="GO" id="GO:0046961">
    <property type="term" value="F:proton-transporting ATPase activity, rotational mechanism"/>
    <property type="evidence" value="ECO:0007669"/>
    <property type="project" value="InterPro"/>
</dbReference>
<dbReference type="FunFam" id="3.40.50.10580:FF:000001">
    <property type="entry name" value="V-type proton ATPase subunit F"/>
    <property type="match status" value="1"/>
</dbReference>
<dbReference type="Gene3D" id="3.40.50.10580">
    <property type="entry name" value="ATPase, V1 complex, subunit F"/>
    <property type="match status" value="1"/>
</dbReference>
<dbReference type="InterPro" id="IPR008218">
    <property type="entry name" value="ATPase_V1-cplx_f_g_su"/>
</dbReference>
<dbReference type="InterPro" id="IPR005772">
    <property type="entry name" value="ATPase_V1-cplx_fsu_euk"/>
</dbReference>
<dbReference type="InterPro" id="IPR036906">
    <property type="entry name" value="ATPase_V1_fsu_sf"/>
</dbReference>
<dbReference type="NCBIfam" id="TIGR01101">
    <property type="entry name" value="V_ATP_synt_F"/>
    <property type="match status" value="1"/>
</dbReference>
<dbReference type="PANTHER" id="PTHR13861:SF2">
    <property type="entry name" value="V-TYPE PROTON ATPASE SUBUNIT F"/>
    <property type="match status" value="1"/>
</dbReference>
<dbReference type="PANTHER" id="PTHR13861">
    <property type="entry name" value="VACUOLAR ATP SYNTHASE SUBUNIT F"/>
    <property type="match status" value="1"/>
</dbReference>
<dbReference type="Pfam" id="PF01990">
    <property type="entry name" value="ATP-synt_F"/>
    <property type="match status" value="1"/>
</dbReference>
<dbReference type="PIRSF" id="PIRSF015945">
    <property type="entry name" value="ATPase_V1_F_euk"/>
    <property type="match status" value="1"/>
</dbReference>
<dbReference type="SUPFAM" id="SSF159468">
    <property type="entry name" value="AtpF-like"/>
    <property type="match status" value="1"/>
</dbReference>
<reference key="1">
    <citation type="submission" date="2000-06" db="EMBL/GenBank/DDBJ databases">
        <title>14-kDa subunit of clathrin-coated vesicle H+-ATPase of Xenopus laevis.</title>
        <authorList>
            <person name="Barreto G."/>
            <person name="Dreyer C."/>
        </authorList>
    </citation>
    <scope>NUCLEOTIDE SEQUENCE [MRNA]</scope>
</reference>
<proteinExistence type="evidence at transcript level"/>
<sequence>VIGDEDTVTGFLLGGIGELNKNRKPNFLVVEKETSVTEIEETFRSFLNRDDIGIILINQFIAEMIRHVIDTHTISIPAVLEIPSKEHPYDATKDSILRRAKGMFTMEDLR</sequence>
<accession>Q9I8H3</accession>
<comment type="function">
    <text evidence="1 2">Subunit of the V1 complex of vacuolar(H+)-ATPase (V-ATPase), a multisubunit enzyme composed of a peripheral complex (V1) that hydrolyzes ATP and a membrane integral complex (V0) that translocates protons (By similarity). V-ATPase is responsible for acidifying and maintaining the pH of intracellular compartments and in some cell types, is targeted to the plasma membrane, where it is responsible for acidifying the extracellular environment (By similarity).</text>
</comment>
<comment type="subunit">
    <text evidence="1">V-ATPase is a heteromultimeric enzyme made up of two complexes: the ATP-hydrolytic V1 complex and the proton translocation V0 complex (By similarity). The V1 complex consists of three catalytic AB heterodimers that form a heterohexamer, three peripheral stalks each consisting of EG heterodimers, one central rotor including subunits D and F, and the regulatory subunits C and H (By similarity). The proton translocation complex V0 consists of the proton transport subunit a, a ring of proteolipid subunits c9c'', rotary subunit d, subunits e and f, and two accessory subunits (By similarity).</text>
</comment>
<comment type="similarity">
    <text evidence="3">Belongs to the V-ATPase F subunit family.</text>
</comment>
<feature type="chain" id="PRO_0000144802" description="V-type proton ATPase subunit F">
    <location>
        <begin position="1" status="less than"/>
        <end position="110"/>
    </location>
</feature>
<feature type="non-terminal residue">
    <location>
        <position position="1"/>
    </location>
</feature>
<organism>
    <name type="scientific">Xenopus laevis</name>
    <name type="common">African clawed frog</name>
    <dbReference type="NCBI Taxonomy" id="8355"/>
    <lineage>
        <taxon>Eukaryota</taxon>
        <taxon>Metazoa</taxon>
        <taxon>Chordata</taxon>
        <taxon>Craniata</taxon>
        <taxon>Vertebrata</taxon>
        <taxon>Euteleostomi</taxon>
        <taxon>Amphibia</taxon>
        <taxon>Batrachia</taxon>
        <taxon>Anura</taxon>
        <taxon>Pipoidea</taxon>
        <taxon>Pipidae</taxon>
        <taxon>Xenopodinae</taxon>
        <taxon>Xenopus</taxon>
        <taxon>Xenopus</taxon>
    </lineage>
</organism>
<keyword id="KW-0375">Hydrogen ion transport</keyword>
<keyword id="KW-0406">Ion transport</keyword>
<keyword id="KW-1185">Reference proteome</keyword>
<keyword id="KW-0813">Transport</keyword>
<evidence type="ECO:0000250" key="1">
    <source>
        <dbReference type="UniProtKB" id="Q16864"/>
    </source>
</evidence>
<evidence type="ECO:0000250" key="2">
    <source>
        <dbReference type="UniProtKB" id="Q28029"/>
    </source>
</evidence>
<evidence type="ECO:0000305" key="3"/>